<dbReference type="EMBL" id="CP000382">
    <property type="protein sequence ID" value="ABK60763.1"/>
    <property type="molecule type" value="Genomic_DNA"/>
</dbReference>
<dbReference type="RefSeq" id="WP_011721235.1">
    <property type="nucleotide sequence ID" value="NC_008593.1"/>
</dbReference>
<dbReference type="SMR" id="A0PXX3"/>
<dbReference type="STRING" id="386415.NT01CX_1142"/>
<dbReference type="KEGG" id="cno:NT01CX_1142"/>
<dbReference type="eggNOG" id="COG0100">
    <property type="taxonomic scope" value="Bacteria"/>
</dbReference>
<dbReference type="HOGENOM" id="CLU_072439_5_0_9"/>
<dbReference type="Proteomes" id="UP000008220">
    <property type="component" value="Chromosome"/>
</dbReference>
<dbReference type="GO" id="GO:1990904">
    <property type="term" value="C:ribonucleoprotein complex"/>
    <property type="evidence" value="ECO:0007669"/>
    <property type="project" value="UniProtKB-KW"/>
</dbReference>
<dbReference type="GO" id="GO:0005840">
    <property type="term" value="C:ribosome"/>
    <property type="evidence" value="ECO:0007669"/>
    <property type="project" value="UniProtKB-KW"/>
</dbReference>
<dbReference type="GO" id="GO:0019843">
    <property type="term" value="F:rRNA binding"/>
    <property type="evidence" value="ECO:0007669"/>
    <property type="project" value="UniProtKB-UniRule"/>
</dbReference>
<dbReference type="GO" id="GO:0003735">
    <property type="term" value="F:structural constituent of ribosome"/>
    <property type="evidence" value="ECO:0007669"/>
    <property type="project" value="InterPro"/>
</dbReference>
<dbReference type="GO" id="GO:0006412">
    <property type="term" value="P:translation"/>
    <property type="evidence" value="ECO:0007669"/>
    <property type="project" value="UniProtKB-UniRule"/>
</dbReference>
<dbReference type="FunFam" id="3.30.420.80:FF:000001">
    <property type="entry name" value="30S ribosomal protein S11"/>
    <property type="match status" value="1"/>
</dbReference>
<dbReference type="Gene3D" id="3.30.420.80">
    <property type="entry name" value="Ribosomal protein S11"/>
    <property type="match status" value="1"/>
</dbReference>
<dbReference type="HAMAP" id="MF_01310">
    <property type="entry name" value="Ribosomal_uS11"/>
    <property type="match status" value="1"/>
</dbReference>
<dbReference type="InterPro" id="IPR001971">
    <property type="entry name" value="Ribosomal_uS11"/>
</dbReference>
<dbReference type="InterPro" id="IPR019981">
    <property type="entry name" value="Ribosomal_uS11_bac-type"/>
</dbReference>
<dbReference type="InterPro" id="IPR018102">
    <property type="entry name" value="Ribosomal_uS11_CS"/>
</dbReference>
<dbReference type="InterPro" id="IPR036967">
    <property type="entry name" value="Ribosomal_uS11_sf"/>
</dbReference>
<dbReference type="NCBIfam" id="NF003698">
    <property type="entry name" value="PRK05309.1"/>
    <property type="match status" value="1"/>
</dbReference>
<dbReference type="NCBIfam" id="TIGR03632">
    <property type="entry name" value="uS11_bact"/>
    <property type="match status" value="1"/>
</dbReference>
<dbReference type="PANTHER" id="PTHR11759">
    <property type="entry name" value="40S RIBOSOMAL PROTEIN S14/30S RIBOSOMAL PROTEIN S11"/>
    <property type="match status" value="1"/>
</dbReference>
<dbReference type="Pfam" id="PF00411">
    <property type="entry name" value="Ribosomal_S11"/>
    <property type="match status" value="1"/>
</dbReference>
<dbReference type="PIRSF" id="PIRSF002131">
    <property type="entry name" value="Ribosomal_S11"/>
    <property type="match status" value="1"/>
</dbReference>
<dbReference type="SUPFAM" id="SSF53137">
    <property type="entry name" value="Translational machinery components"/>
    <property type="match status" value="1"/>
</dbReference>
<dbReference type="PROSITE" id="PS00054">
    <property type="entry name" value="RIBOSOMAL_S11"/>
    <property type="match status" value="1"/>
</dbReference>
<accession>A0PXX3</accession>
<evidence type="ECO:0000255" key="1">
    <source>
        <dbReference type="HAMAP-Rule" id="MF_01310"/>
    </source>
</evidence>
<evidence type="ECO:0000305" key="2"/>
<proteinExistence type="inferred from homology"/>
<protein>
    <recommendedName>
        <fullName evidence="1">Small ribosomal subunit protein uS11</fullName>
    </recommendedName>
    <alternativeName>
        <fullName evidence="2">30S ribosomal protein S11</fullName>
    </alternativeName>
</protein>
<comment type="function">
    <text evidence="1">Located on the platform of the 30S subunit, it bridges several disparate RNA helices of the 16S rRNA. Forms part of the Shine-Dalgarno cleft in the 70S ribosome.</text>
</comment>
<comment type="subunit">
    <text evidence="1">Part of the 30S ribosomal subunit. Interacts with proteins S7 and S18. Binds to IF-3.</text>
</comment>
<comment type="similarity">
    <text evidence="1">Belongs to the universal ribosomal protein uS11 family.</text>
</comment>
<gene>
    <name evidence="1" type="primary">rpsK</name>
    <name type="ordered locus">NT01CX_1142</name>
</gene>
<sequence length="131" mass="14007">MAKANTRKTRRKKERKNIEHGCAHIKSTFNNSIVTITDAVGNALSWSSAGALGFKGSRKSTPFAAQMAAETAATAAMEHGLKSIEVYVKGPGAGREAAIRSLQAAGLEITLIKDVTPIPHNGCRPPKRRRV</sequence>
<reference key="1">
    <citation type="journal article" date="2006" name="Nat. Biotechnol.">
        <title>The genome and transcriptomes of the anti-tumor agent Clostridium novyi-NT.</title>
        <authorList>
            <person name="Bettegowda C."/>
            <person name="Huang X."/>
            <person name="Lin J."/>
            <person name="Cheong I."/>
            <person name="Kohli M."/>
            <person name="Szabo S.A."/>
            <person name="Zhang X."/>
            <person name="Diaz L.A. Jr."/>
            <person name="Velculescu V.E."/>
            <person name="Parmigiani G."/>
            <person name="Kinzler K.W."/>
            <person name="Vogelstein B."/>
            <person name="Zhou S."/>
        </authorList>
    </citation>
    <scope>NUCLEOTIDE SEQUENCE [LARGE SCALE GENOMIC DNA]</scope>
    <source>
        <strain>NT</strain>
    </source>
</reference>
<name>RS11_CLONN</name>
<keyword id="KW-1185">Reference proteome</keyword>
<keyword id="KW-0687">Ribonucleoprotein</keyword>
<keyword id="KW-0689">Ribosomal protein</keyword>
<keyword id="KW-0694">RNA-binding</keyword>
<keyword id="KW-0699">rRNA-binding</keyword>
<feature type="chain" id="PRO_0000294739" description="Small ribosomal subunit protein uS11">
    <location>
        <begin position="1"/>
        <end position="131"/>
    </location>
</feature>
<organism>
    <name type="scientific">Clostridium novyi (strain NT)</name>
    <dbReference type="NCBI Taxonomy" id="386415"/>
    <lineage>
        <taxon>Bacteria</taxon>
        <taxon>Bacillati</taxon>
        <taxon>Bacillota</taxon>
        <taxon>Clostridia</taxon>
        <taxon>Eubacteriales</taxon>
        <taxon>Clostridiaceae</taxon>
        <taxon>Clostridium</taxon>
    </lineage>
</organism>